<feature type="chain" id="PRO_0000335193" description="DNA mismatch repair protein MutS">
    <location>
        <begin position="1"/>
        <end position="863"/>
    </location>
</feature>
<feature type="binding site" evidence="1">
    <location>
        <begin position="615"/>
        <end position="622"/>
    </location>
    <ligand>
        <name>ATP</name>
        <dbReference type="ChEBI" id="CHEBI:30616"/>
    </ligand>
</feature>
<reference key="1">
    <citation type="journal article" date="2008" name="Genome Res.">
        <title>The genome of Pelotomaculum thermopropionicum reveals niche-associated evolution in anaerobic microbiota.</title>
        <authorList>
            <person name="Kosaka T."/>
            <person name="Kato S."/>
            <person name="Shimoyama T."/>
            <person name="Ishii S."/>
            <person name="Abe T."/>
            <person name="Watanabe K."/>
        </authorList>
    </citation>
    <scope>NUCLEOTIDE SEQUENCE [LARGE SCALE GENOMIC DNA]</scope>
    <source>
        <strain>DSM 13744 / JCM 10971 / SI</strain>
    </source>
</reference>
<organism>
    <name type="scientific">Pelotomaculum thermopropionicum (strain DSM 13744 / JCM 10971 / SI)</name>
    <dbReference type="NCBI Taxonomy" id="370438"/>
    <lineage>
        <taxon>Bacteria</taxon>
        <taxon>Bacillati</taxon>
        <taxon>Bacillota</taxon>
        <taxon>Clostridia</taxon>
        <taxon>Eubacteriales</taxon>
        <taxon>Desulfotomaculaceae</taxon>
        <taxon>Pelotomaculum</taxon>
    </lineage>
</organism>
<comment type="function">
    <text evidence="1">This protein is involved in the repair of mismatches in DNA. It is possible that it carries out the mismatch recognition step. This protein has a weak ATPase activity.</text>
</comment>
<comment type="similarity">
    <text evidence="1">Belongs to the DNA mismatch repair MutS family.</text>
</comment>
<sequence length="863" mass="96520">MIRQYLEIKKQYPDAILFFRLGDFYEMFFDDARLASRELEITLTGRDGGSERVPMCGIPYHAADGYIARLISKGYRVAICEQVEDPAEAKGIVRREVTRVITPGTVTEGHFLEDKKNNYLASIAPFEEGYGLAVTDITTGVFMVSSFSGVRAWSELIDEMARLNPAEVIIPLAYSDKMGGDLKQQGILAVSGYRDTAFSPAEAVPAFEEQFGSAGSLCNRTIDYHAAVAAAGALLIFLRETQKRVLKHINKAAFYRPGKYMILDANTRRNLELTRAISDGSRRNTLLSVIDHTVTAMGGRLLRNWIEQPLLDVAEIKARLEATEDLAGNAMLRLELKSLLKNVYDLERLTGKISFGTANARDLIGLKKSLANLPLIKQLLLAQAGAALLKDVARSIDPLEEVRELLEAAIDDNPPLSLKDGGIIKKGYNHEVDRLRQARREGKSMLAGLEERERARTGIKSLKVGFNKVFGYYIEVTRANLELVPEDYQRRQTLANAERFITPELKEYEDMILRAEERLASLERRLFDEVLERLSGEIHRIQKSASAIATADALYSLAEAAVKGRYSRPEIAEDGKLHVKDGRHPVLEQVMGPGRFVPNDTFMDNEESRFILLTGPNMAGKSTYMRQVALIVLLAQIGSFVPALFARIPVFDRIFTRVGASDDIAGGQSTFMVEMNECRIIVNEATEKSLIIMDEVGRGTSTYDGISIARALAEYIHTKIRAKTLFSTHYHELTDLDSMPGIVNFNVAVREEGEDIIFLRKVVPGKSDRSYGIQVARLAGLPGEIINRSMEILKTLELAAERPPQPSPAKEWPAYRYKENECHVIQELRRLNVLEMTPLEAINKLYMLHKKLTESATLKTTSL</sequence>
<name>MUTS_PELTS</name>
<gene>
    <name evidence="1" type="primary">mutS</name>
    <name type="ordered locus">PTH_1339</name>
</gene>
<dbReference type="EMBL" id="AP009389">
    <property type="protein sequence ID" value="BAF59520.1"/>
    <property type="molecule type" value="Genomic_DNA"/>
</dbReference>
<dbReference type="SMR" id="A5D2K2"/>
<dbReference type="STRING" id="370438.PTH_1339"/>
<dbReference type="KEGG" id="pth:PTH_1339"/>
<dbReference type="eggNOG" id="COG0249">
    <property type="taxonomic scope" value="Bacteria"/>
</dbReference>
<dbReference type="HOGENOM" id="CLU_002472_3_1_9"/>
<dbReference type="Proteomes" id="UP000006556">
    <property type="component" value="Chromosome"/>
</dbReference>
<dbReference type="GO" id="GO:0005829">
    <property type="term" value="C:cytosol"/>
    <property type="evidence" value="ECO:0007669"/>
    <property type="project" value="TreeGrafter"/>
</dbReference>
<dbReference type="GO" id="GO:0005524">
    <property type="term" value="F:ATP binding"/>
    <property type="evidence" value="ECO:0007669"/>
    <property type="project" value="UniProtKB-UniRule"/>
</dbReference>
<dbReference type="GO" id="GO:0140664">
    <property type="term" value="F:ATP-dependent DNA damage sensor activity"/>
    <property type="evidence" value="ECO:0007669"/>
    <property type="project" value="InterPro"/>
</dbReference>
<dbReference type="GO" id="GO:0003684">
    <property type="term" value="F:damaged DNA binding"/>
    <property type="evidence" value="ECO:0007669"/>
    <property type="project" value="UniProtKB-UniRule"/>
</dbReference>
<dbReference type="GO" id="GO:0030983">
    <property type="term" value="F:mismatched DNA binding"/>
    <property type="evidence" value="ECO:0007669"/>
    <property type="project" value="InterPro"/>
</dbReference>
<dbReference type="GO" id="GO:0006298">
    <property type="term" value="P:mismatch repair"/>
    <property type="evidence" value="ECO:0007669"/>
    <property type="project" value="UniProtKB-UniRule"/>
</dbReference>
<dbReference type="CDD" id="cd03284">
    <property type="entry name" value="ABC_MutS1"/>
    <property type="match status" value="1"/>
</dbReference>
<dbReference type="FunFam" id="1.10.1420.10:FF:000007">
    <property type="entry name" value="DNA mismatch repair protein MutS"/>
    <property type="match status" value="1"/>
</dbReference>
<dbReference type="FunFam" id="3.40.1170.10:FF:000001">
    <property type="entry name" value="DNA mismatch repair protein MutS"/>
    <property type="match status" value="1"/>
</dbReference>
<dbReference type="FunFam" id="3.40.50.300:FF:000870">
    <property type="entry name" value="MutS protein homolog 4"/>
    <property type="match status" value="1"/>
</dbReference>
<dbReference type="Gene3D" id="1.10.1420.10">
    <property type="match status" value="2"/>
</dbReference>
<dbReference type="Gene3D" id="3.40.1170.10">
    <property type="entry name" value="DNA repair protein MutS, domain I"/>
    <property type="match status" value="1"/>
</dbReference>
<dbReference type="Gene3D" id="3.30.420.110">
    <property type="entry name" value="MutS, connector domain"/>
    <property type="match status" value="1"/>
</dbReference>
<dbReference type="Gene3D" id="3.40.50.300">
    <property type="entry name" value="P-loop containing nucleotide triphosphate hydrolases"/>
    <property type="match status" value="1"/>
</dbReference>
<dbReference type="HAMAP" id="MF_00096">
    <property type="entry name" value="MutS"/>
    <property type="match status" value="1"/>
</dbReference>
<dbReference type="InterPro" id="IPR005748">
    <property type="entry name" value="DNA_mismatch_repair_MutS"/>
</dbReference>
<dbReference type="InterPro" id="IPR007695">
    <property type="entry name" value="DNA_mismatch_repair_MutS-lik_N"/>
</dbReference>
<dbReference type="InterPro" id="IPR017261">
    <property type="entry name" value="DNA_mismatch_repair_MutS/MSH"/>
</dbReference>
<dbReference type="InterPro" id="IPR000432">
    <property type="entry name" value="DNA_mismatch_repair_MutS_C"/>
</dbReference>
<dbReference type="InterPro" id="IPR007861">
    <property type="entry name" value="DNA_mismatch_repair_MutS_clamp"/>
</dbReference>
<dbReference type="InterPro" id="IPR007696">
    <property type="entry name" value="DNA_mismatch_repair_MutS_core"/>
</dbReference>
<dbReference type="InterPro" id="IPR016151">
    <property type="entry name" value="DNA_mismatch_repair_MutS_N"/>
</dbReference>
<dbReference type="InterPro" id="IPR036187">
    <property type="entry name" value="DNA_mismatch_repair_MutS_sf"/>
</dbReference>
<dbReference type="InterPro" id="IPR007860">
    <property type="entry name" value="DNA_mmatch_repair_MutS_con_dom"/>
</dbReference>
<dbReference type="InterPro" id="IPR045076">
    <property type="entry name" value="MutS"/>
</dbReference>
<dbReference type="InterPro" id="IPR036678">
    <property type="entry name" value="MutS_con_dom_sf"/>
</dbReference>
<dbReference type="InterPro" id="IPR027417">
    <property type="entry name" value="P-loop_NTPase"/>
</dbReference>
<dbReference type="NCBIfam" id="TIGR01070">
    <property type="entry name" value="mutS1"/>
    <property type="match status" value="1"/>
</dbReference>
<dbReference type="NCBIfam" id="NF003810">
    <property type="entry name" value="PRK05399.1"/>
    <property type="match status" value="1"/>
</dbReference>
<dbReference type="PANTHER" id="PTHR11361:SF34">
    <property type="entry name" value="DNA MISMATCH REPAIR PROTEIN MSH1, MITOCHONDRIAL"/>
    <property type="match status" value="1"/>
</dbReference>
<dbReference type="PANTHER" id="PTHR11361">
    <property type="entry name" value="DNA MISMATCH REPAIR PROTEIN MUTS FAMILY MEMBER"/>
    <property type="match status" value="1"/>
</dbReference>
<dbReference type="Pfam" id="PF01624">
    <property type="entry name" value="MutS_I"/>
    <property type="match status" value="1"/>
</dbReference>
<dbReference type="Pfam" id="PF05188">
    <property type="entry name" value="MutS_II"/>
    <property type="match status" value="1"/>
</dbReference>
<dbReference type="Pfam" id="PF05192">
    <property type="entry name" value="MutS_III"/>
    <property type="match status" value="1"/>
</dbReference>
<dbReference type="Pfam" id="PF05190">
    <property type="entry name" value="MutS_IV"/>
    <property type="match status" value="1"/>
</dbReference>
<dbReference type="Pfam" id="PF00488">
    <property type="entry name" value="MutS_V"/>
    <property type="match status" value="1"/>
</dbReference>
<dbReference type="PIRSF" id="PIRSF037677">
    <property type="entry name" value="DNA_mis_repair_Msh6"/>
    <property type="match status" value="1"/>
</dbReference>
<dbReference type="SMART" id="SM00534">
    <property type="entry name" value="MUTSac"/>
    <property type="match status" value="1"/>
</dbReference>
<dbReference type="SMART" id="SM00533">
    <property type="entry name" value="MUTSd"/>
    <property type="match status" value="1"/>
</dbReference>
<dbReference type="SUPFAM" id="SSF55271">
    <property type="entry name" value="DNA repair protein MutS, domain I"/>
    <property type="match status" value="1"/>
</dbReference>
<dbReference type="SUPFAM" id="SSF53150">
    <property type="entry name" value="DNA repair protein MutS, domain II"/>
    <property type="match status" value="1"/>
</dbReference>
<dbReference type="SUPFAM" id="SSF48334">
    <property type="entry name" value="DNA repair protein MutS, domain III"/>
    <property type="match status" value="1"/>
</dbReference>
<dbReference type="SUPFAM" id="SSF52540">
    <property type="entry name" value="P-loop containing nucleoside triphosphate hydrolases"/>
    <property type="match status" value="1"/>
</dbReference>
<dbReference type="PROSITE" id="PS00486">
    <property type="entry name" value="DNA_MISMATCH_REPAIR_2"/>
    <property type="match status" value="1"/>
</dbReference>
<evidence type="ECO:0000255" key="1">
    <source>
        <dbReference type="HAMAP-Rule" id="MF_00096"/>
    </source>
</evidence>
<proteinExistence type="inferred from homology"/>
<accession>A5D2K2</accession>
<protein>
    <recommendedName>
        <fullName evidence="1">DNA mismatch repair protein MutS</fullName>
    </recommendedName>
</protein>
<keyword id="KW-0067">ATP-binding</keyword>
<keyword id="KW-0227">DNA damage</keyword>
<keyword id="KW-0234">DNA repair</keyword>
<keyword id="KW-0238">DNA-binding</keyword>
<keyword id="KW-0547">Nucleotide-binding</keyword>
<keyword id="KW-1185">Reference proteome</keyword>